<feature type="chain" id="PRO_0000457349" description="Thrombocorticin">
    <location>
        <begin position="1"/>
        <end position="131"/>
    </location>
</feature>
<feature type="region of interest" description="Disordered" evidence="1">
    <location>
        <begin position="28"/>
        <end position="60"/>
    </location>
</feature>
<feature type="short sequence motif" description="Pseudodomain-swapping motif" evidence="5">
    <location>
        <begin position="117"/>
        <end position="131"/>
    </location>
</feature>
<feature type="compositionally biased region" description="Low complexity" evidence="1">
    <location>
        <begin position="37"/>
        <end position="54"/>
    </location>
</feature>
<feature type="site" description="Fucose-binding" evidence="3">
    <location>
        <position position="25"/>
    </location>
</feature>
<feature type="disulfide bond" evidence="3">
    <location>
        <begin position="3"/>
        <end position="111"/>
    </location>
</feature>
<feature type="mutagenesis site" description="Lack of fucose binding." evidence="3">
    <original>Q</original>
    <variation>K</variation>
    <location>
        <position position="25"/>
    </location>
</feature>
<feature type="mutagenesis site" description="Reduced fucose-binding activity. Loss of agonist activity for thrombopoietin receptor MPL." evidence="3">
    <original>G</original>
    <variation>GG</variation>
    <location>
        <position position="131"/>
    </location>
</feature>
<feature type="strand" evidence="13">
    <location>
        <begin position="8"/>
        <end position="10"/>
    </location>
</feature>
<feature type="strand" evidence="13">
    <location>
        <begin position="17"/>
        <end position="24"/>
    </location>
</feature>
<feature type="strand" evidence="13">
    <location>
        <begin position="26"/>
        <end position="28"/>
    </location>
</feature>
<feature type="strand" evidence="13">
    <location>
        <begin position="30"/>
        <end position="35"/>
    </location>
</feature>
<feature type="strand" evidence="13">
    <location>
        <begin position="41"/>
        <end position="47"/>
    </location>
</feature>
<feature type="turn" evidence="13">
    <location>
        <begin position="51"/>
        <end position="53"/>
    </location>
</feature>
<feature type="strand" evidence="13">
    <location>
        <begin position="56"/>
        <end position="58"/>
    </location>
</feature>
<feature type="strand" evidence="13">
    <location>
        <begin position="61"/>
        <end position="66"/>
    </location>
</feature>
<feature type="strand" evidence="13">
    <location>
        <begin position="72"/>
        <end position="76"/>
    </location>
</feature>
<feature type="helix" evidence="13">
    <location>
        <begin position="78"/>
        <end position="80"/>
    </location>
</feature>
<feature type="strand" evidence="13">
    <location>
        <begin position="83"/>
        <end position="93"/>
    </location>
</feature>
<feature type="strand" evidence="13">
    <location>
        <begin position="96"/>
        <end position="107"/>
    </location>
</feature>
<feature type="strand" evidence="12">
    <location>
        <begin position="111"/>
        <end position="113"/>
    </location>
</feature>
<feature type="strand" evidence="13">
    <location>
        <begin position="120"/>
        <end position="128"/>
    </location>
</feature>
<dbReference type="PDB" id="7F91">
    <property type="method" value="X-ray"/>
    <property type="resolution" value="1.40 A"/>
    <property type="chains" value="A/B=1-131"/>
</dbReference>
<dbReference type="PDB" id="7F9F">
    <property type="method" value="X-ray"/>
    <property type="resolution" value="1.41 A"/>
    <property type="chains" value="A/B/C/D=1-131"/>
</dbReference>
<dbReference type="PDB" id="7F9G">
    <property type="method" value="X-ray"/>
    <property type="resolution" value="1.33 A"/>
    <property type="chains" value="A/B=1-131"/>
</dbReference>
<dbReference type="PDB" id="7F9J">
    <property type="method" value="X-ray"/>
    <property type="resolution" value="1.10 A"/>
    <property type="chains" value="A/B=1-131"/>
</dbReference>
<dbReference type="PDB" id="7FBL">
    <property type="method" value="X-ray"/>
    <property type="resolution" value="1.42 A"/>
    <property type="chains" value="A/B=1-131"/>
</dbReference>
<dbReference type="PDBsum" id="7F91"/>
<dbReference type="PDBsum" id="7F9F"/>
<dbReference type="PDBsum" id="7F9G"/>
<dbReference type="PDBsum" id="7F9J"/>
<dbReference type="PDBsum" id="7FBL"/>
<dbReference type="SMR" id="C0HM62"/>
<dbReference type="UniLectin" id="C0HM62"/>
<dbReference type="Gene3D" id="2.60.120.400">
    <property type="entry name" value="Calcium-mediated lectin"/>
    <property type="match status" value="1"/>
</dbReference>
<dbReference type="InterPro" id="IPR036684">
    <property type="entry name" value="Ca_lectin_sf"/>
</dbReference>
<evidence type="ECO:0000256" key="1">
    <source>
        <dbReference type="SAM" id="MobiDB-lite"/>
    </source>
</evidence>
<evidence type="ECO:0000269" key="2">
    <source>
    </source>
</evidence>
<evidence type="ECO:0000269" key="3">
    <source ref="2"/>
</evidence>
<evidence type="ECO:0000303" key="4">
    <source>
    </source>
</evidence>
<evidence type="ECO:0000303" key="5">
    <source ref="2"/>
</evidence>
<evidence type="ECO:0000305" key="6"/>
<evidence type="ECO:0007744" key="7">
    <source>
        <dbReference type="PDB" id="7F91"/>
    </source>
</evidence>
<evidence type="ECO:0007744" key="8">
    <source>
        <dbReference type="PDB" id="7F9F"/>
    </source>
</evidence>
<evidence type="ECO:0007744" key="9">
    <source>
        <dbReference type="PDB" id="7F9G"/>
    </source>
</evidence>
<evidence type="ECO:0007744" key="10">
    <source>
        <dbReference type="PDB" id="7F9J"/>
    </source>
</evidence>
<evidence type="ECO:0007744" key="11">
    <source>
        <dbReference type="PDB" id="7FBL"/>
    </source>
</evidence>
<evidence type="ECO:0007829" key="12">
    <source>
        <dbReference type="PDB" id="7F91"/>
    </source>
</evidence>
<evidence type="ECO:0007829" key="13">
    <source>
        <dbReference type="PDB" id="7F9J"/>
    </source>
</evidence>
<keyword id="KW-0002">3D-structure</keyword>
<keyword id="KW-0903">Direct protein sequencing</keyword>
<keyword id="KW-1015">Disulfide bond</keyword>
<proteinExistence type="evidence at protein level"/>
<organism>
    <name type="scientific">Corticium sp.</name>
    <name type="common">Marine sponge</name>
    <dbReference type="NCBI Taxonomy" id="2688366"/>
    <lineage>
        <taxon>Eukaryota</taxon>
        <taxon>Metazoa</taxon>
        <taxon>Porifera</taxon>
        <taxon>Homoscleromorpha</taxon>
        <taxon>Homosclerophorida</taxon>
        <taxon>Plakinidae</taxon>
        <taxon>Corticium</taxon>
    </lineage>
</organism>
<name>THRCO_CORXX</name>
<comment type="function">
    <text evidence="2 3">Binds to fucose and mannose in a calcium-dependent manner (in vitro) (Ref.2). Acts as an agonist for human thrombopoietin receptor MPL (in vitro) (PubMed:30978513, Ref.2). Binding of sugar-moieties may promote the interaction with human MPL on the cell surface (in vitro) (Ref.2). Catalyzes MPL dimerization and activation, and modulates internalization of the receptor (in vitro) (Ref.2). Exhibits proliferation activity in murine recombinant Ba/F3 cells expressing human MPL (Ba/F3-huMPL) (in vitro) (PubMed:30978513). Induces phosphorylation of STAT5 in recombinant Ba/F3-huMPL cells, possibly by stimulating MPL on the cell surface to transduce signals via Jak/STAT signaling pathway (in vitro) (PubMed:30978513, Ref.2). Does not aggregate rabbit erythrocytes, indicating absent lectin-like agglutination activity (in vitro) (PubMed:30978513).</text>
</comment>
<comment type="domain">
    <text evidence="3">The pseudodomain-swapping motif enables stable carbohydrate binding.</text>
</comment>
<comment type="mass spectrometry"/>
<sequence>TACTTGPQTISFPAGLIVSLNASVQSSRNESVEVKDSNGNTVSRGSGSSSSGGTFTVINMEPPTFISDGNDYTVELSPQATPGILQTESSRVDNGRLIWQNYAFGANDGGCIVGDRDFNDVFVLITGLVRG</sequence>
<protein>
    <recommendedName>
        <fullName evidence="4">Thrombocorticin</fullName>
        <shortName evidence="4">ThC</shortName>
    </recommendedName>
</protein>
<accession>C0HM62</accession>
<reference evidence="6" key="1">
    <citation type="journal article" date="2019" name="Comp. Biochem. Physiol.">
        <title>A novel sponge-derived protein thrombocorticin is a new agonist for thrombopoietin receptor.</title>
        <authorList>
            <person name="Watari H."/>
            <person name="Nakajima H."/>
            <person name="Atsuumi W."/>
            <person name="Nakamura T."/>
            <person name="Nanya T."/>
            <person name="Ise Y."/>
            <person name="Sakai R."/>
        </authorList>
    </citation>
    <scope>PROTEIN SEQUENCE OF 1-2 AND 4-7</scope>
    <scope>FUNCTION</scope>
    <scope>MASS SPECTROMETRY</scope>
    <scope>DISULFIDE BOND</scope>
</reference>
<reference evidence="7 8 9 10 11" key="2">
    <citation type="submission" date="2022-10" db="UniProtKB">
        <title>Hidden pathway for cytokine receptor activation: Structural insights into a marine sponge-derived lectin that activates the thrombopoietin receptor via recognition of the fucose moiety.</title>
        <authorList>
            <person name="Watari H."/>
            <person name="Kageyama H."/>
            <person name="Masubuchi N."/>
            <person name="Nakajima H."/>
            <person name="Onodera K."/>
            <person name="Focia P."/>
            <person name="Oshiro T."/>
            <person name="Matsui T."/>
            <person name="Kodera Y."/>
            <person name="Ogawa T."/>
            <person name="Yokoyama T."/>
            <person name="Hirayama M."/>
            <person name="Hori K."/>
            <person name="Freymann D."/>
            <person name="Komatsu N."/>
            <person name="Araki M."/>
            <person name="Tanaka Y."/>
            <person name="Sakai R."/>
        </authorList>
    </citation>
    <scope>X-RAY CRYSTALLOGRAPHY (1.1 ANGSTROMS) OF MUTANT LYS-25 IN COMPLEX WITH CALCIUM; FUCOSE AND MANNOSE</scope>
    <scope>PROTEIN SEQUENCE OF 1-34</scope>
    <scope>FUNCTION</scope>
    <scope>SUBUNIT</scope>
    <scope>DOMAIN</scope>
    <scope>DISULFIDE BOND</scope>
    <scope>MUTAGENESIS OF GLN-25 AND GLY-131</scope>
    <source>
        <strain>Chuuk</strain>
    </source>
</reference>